<organism>
    <name type="scientific">Shigella dysenteriae serotype 1 (strain Sd197)</name>
    <dbReference type="NCBI Taxonomy" id="300267"/>
    <lineage>
        <taxon>Bacteria</taxon>
        <taxon>Pseudomonadati</taxon>
        <taxon>Pseudomonadota</taxon>
        <taxon>Gammaproteobacteria</taxon>
        <taxon>Enterobacterales</taxon>
        <taxon>Enterobacteriaceae</taxon>
        <taxon>Shigella</taxon>
    </lineage>
</organism>
<evidence type="ECO:0000255" key="1">
    <source>
        <dbReference type="HAMAP-Rule" id="MF_00766"/>
    </source>
</evidence>
<comment type="function">
    <text evidence="1">Peptidoglycan polymerase that catalyzes glycan chain elongation from lipid-linked precursors.</text>
</comment>
<comment type="catalytic activity">
    <reaction evidence="1">
        <text>[GlcNAc-(1-&gt;4)-Mur2Ac(oyl-L-Ala-gamma-D-Glu-L-Lys-D-Ala-D-Ala)](n)-di-trans,octa-cis-undecaprenyl diphosphate + beta-D-GlcNAc-(1-&gt;4)-Mur2Ac(oyl-L-Ala-gamma-D-Glu-L-Lys-D-Ala-D-Ala)-di-trans,octa-cis-undecaprenyl diphosphate = [GlcNAc-(1-&gt;4)-Mur2Ac(oyl-L-Ala-gamma-D-Glu-L-Lys-D-Ala-D-Ala)](n+1)-di-trans,octa-cis-undecaprenyl diphosphate + di-trans,octa-cis-undecaprenyl diphosphate + H(+)</text>
        <dbReference type="Rhea" id="RHEA:23708"/>
        <dbReference type="Rhea" id="RHEA-COMP:9602"/>
        <dbReference type="Rhea" id="RHEA-COMP:9603"/>
        <dbReference type="ChEBI" id="CHEBI:15378"/>
        <dbReference type="ChEBI" id="CHEBI:58405"/>
        <dbReference type="ChEBI" id="CHEBI:60033"/>
        <dbReference type="ChEBI" id="CHEBI:78435"/>
        <dbReference type="EC" id="2.4.99.28"/>
    </reaction>
</comment>
<comment type="pathway">
    <text evidence="1">Cell wall biogenesis; peptidoglycan biosynthesis.</text>
</comment>
<comment type="subcellular location">
    <subcellularLocation>
        <location evidence="1">Cell inner membrane</location>
        <topology evidence="1">Single-pass membrane protein</topology>
    </subcellularLocation>
</comment>
<comment type="similarity">
    <text evidence="1">Belongs to the glycosyltransferase 51 family.</text>
</comment>
<sequence>MSKSRLTVFSFVRRFLLRLMVVLAVFWGGGIALFSVAPVPFSAVMVERQVSAWLHGNFRYVAHSDWVSMDQISPWMGLAVIAAEDQKFPEHWGFDVASIEKALAHNERNENRIRGASTISQQTAKNLFLWDGRSWVRKGLEAGLTLGIETVWSKKRILTVYLNIAEFGDGVFGVEAAAQRYFHKPASKLTRSEAALLAAVLPNPLRFKVSAPSGYVRSRQAWILRQMYQLGGEPFMQQHQLD</sequence>
<accession>Q32BC5</accession>
<gene>
    <name evidence="1" type="primary">mtgA</name>
    <name type="ordered locus">SDY_3389</name>
</gene>
<protein>
    <recommendedName>
        <fullName evidence="1">Biosynthetic peptidoglycan transglycosylase</fullName>
        <ecNumber evidence="1">2.4.99.28</ecNumber>
    </recommendedName>
    <alternativeName>
        <fullName evidence="1">Glycan polymerase</fullName>
    </alternativeName>
    <alternativeName>
        <fullName evidence="1">Peptidoglycan glycosyltransferase MtgA</fullName>
        <shortName evidence="1">PGT</shortName>
    </alternativeName>
</protein>
<keyword id="KW-0997">Cell inner membrane</keyword>
<keyword id="KW-1003">Cell membrane</keyword>
<keyword id="KW-0133">Cell shape</keyword>
<keyword id="KW-0961">Cell wall biogenesis/degradation</keyword>
<keyword id="KW-0328">Glycosyltransferase</keyword>
<keyword id="KW-0472">Membrane</keyword>
<keyword id="KW-0573">Peptidoglycan synthesis</keyword>
<keyword id="KW-1185">Reference proteome</keyword>
<keyword id="KW-0808">Transferase</keyword>
<keyword id="KW-0812">Transmembrane</keyword>
<keyword id="KW-1133">Transmembrane helix</keyword>
<proteinExistence type="inferred from homology"/>
<dbReference type="EC" id="2.4.99.28" evidence="1"/>
<dbReference type="EMBL" id="CP000034">
    <property type="protein sequence ID" value="ABB63380.1"/>
    <property type="molecule type" value="Genomic_DNA"/>
</dbReference>
<dbReference type="RefSeq" id="WP_000047087.1">
    <property type="nucleotide sequence ID" value="NC_007606.1"/>
</dbReference>
<dbReference type="RefSeq" id="YP_404871.1">
    <property type="nucleotide sequence ID" value="NC_007606.1"/>
</dbReference>
<dbReference type="SMR" id="Q32BC5"/>
<dbReference type="STRING" id="300267.SDY_3389"/>
<dbReference type="CAZy" id="GT51">
    <property type="family name" value="Glycosyltransferase Family 51"/>
</dbReference>
<dbReference type="EnsemblBacteria" id="ABB63380">
    <property type="protein sequence ID" value="ABB63380"/>
    <property type="gene ID" value="SDY_3389"/>
</dbReference>
<dbReference type="GeneID" id="75173382"/>
<dbReference type="KEGG" id="sdy:SDY_3389"/>
<dbReference type="PATRIC" id="fig|300267.13.peg.4043"/>
<dbReference type="HOGENOM" id="CLU_006354_1_1_6"/>
<dbReference type="UniPathway" id="UPA00219"/>
<dbReference type="Proteomes" id="UP000002716">
    <property type="component" value="Chromosome"/>
</dbReference>
<dbReference type="GO" id="GO:0009274">
    <property type="term" value="C:peptidoglycan-based cell wall"/>
    <property type="evidence" value="ECO:0007669"/>
    <property type="project" value="InterPro"/>
</dbReference>
<dbReference type="GO" id="GO:0005886">
    <property type="term" value="C:plasma membrane"/>
    <property type="evidence" value="ECO:0007669"/>
    <property type="project" value="UniProtKB-SubCell"/>
</dbReference>
<dbReference type="GO" id="GO:0016763">
    <property type="term" value="F:pentosyltransferase activity"/>
    <property type="evidence" value="ECO:0007669"/>
    <property type="project" value="InterPro"/>
</dbReference>
<dbReference type="GO" id="GO:0008955">
    <property type="term" value="F:peptidoglycan glycosyltransferase activity"/>
    <property type="evidence" value="ECO:0007669"/>
    <property type="project" value="UniProtKB-UniRule"/>
</dbReference>
<dbReference type="GO" id="GO:0071555">
    <property type="term" value="P:cell wall organization"/>
    <property type="evidence" value="ECO:0007669"/>
    <property type="project" value="UniProtKB-KW"/>
</dbReference>
<dbReference type="GO" id="GO:0009252">
    <property type="term" value="P:peptidoglycan biosynthetic process"/>
    <property type="evidence" value="ECO:0007669"/>
    <property type="project" value="UniProtKB-UniRule"/>
</dbReference>
<dbReference type="GO" id="GO:0008360">
    <property type="term" value="P:regulation of cell shape"/>
    <property type="evidence" value="ECO:0007669"/>
    <property type="project" value="UniProtKB-KW"/>
</dbReference>
<dbReference type="FunFam" id="1.10.3810.10:FF:000004">
    <property type="entry name" value="Biosynthetic peptidoglycan transglycosylase"/>
    <property type="match status" value="1"/>
</dbReference>
<dbReference type="Gene3D" id="1.10.3810.10">
    <property type="entry name" value="Biosynthetic peptidoglycan transglycosylase-like"/>
    <property type="match status" value="1"/>
</dbReference>
<dbReference type="HAMAP" id="MF_00766">
    <property type="entry name" value="PGT_MtgA"/>
    <property type="match status" value="1"/>
</dbReference>
<dbReference type="InterPro" id="IPR001264">
    <property type="entry name" value="Glyco_trans_51"/>
</dbReference>
<dbReference type="InterPro" id="IPR023346">
    <property type="entry name" value="Lysozyme-like_dom_sf"/>
</dbReference>
<dbReference type="InterPro" id="IPR036950">
    <property type="entry name" value="PBP_transglycosylase"/>
</dbReference>
<dbReference type="InterPro" id="IPR011812">
    <property type="entry name" value="Pep_trsgly"/>
</dbReference>
<dbReference type="NCBIfam" id="TIGR02070">
    <property type="entry name" value="mono_pep_trsgly"/>
    <property type="match status" value="1"/>
</dbReference>
<dbReference type="PANTHER" id="PTHR30400:SF0">
    <property type="entry name" value="BIOSYNTHETIC PEPTIDOGLYCAN TRANSGLYCOSYLASE"/>
    <property type="match status" value="1"/>
</dbReference>
<dbReference type="PANTHER" id="PTHR30400">
    <property type="entry name" value="MONOFUNCTIONAL BIOSYNTHETIC PEPTIDOGLYCAN TRANSGLYCOSYLASE"/>
    <property type="match status" value="1"/>
</dbReference>
<dbReference type="Pfam" id="PF00912">
    <property type="entry name" value="Transgly"/>
    <property type="match status" value="1"/>
</dbReference>
<dbReference type="SUPFAM" id="SSF53955">
    <property type="entry name" value="Lysozyme-like"/>
    <property type="match status" value="1"/>
</dbReference>
<reference key="1">
    <citation type="journal article" date="2005" name="Nucleic Acids Res.">
        <title>Genome dynamics and diversity of Shigella species, the etiologic agents of bacillary dysentery.</title>
        <authorList>
            <person name="Yang F."/>
            <person name="Yang J."/>
            <person name="Zhang X."/>
            <person name="Chen L."/>
            <person name="Jiang Y."/>
            <person name="Yan Y."/>
            <person name="Tang X."/>
            <person name="Wang J."/>
            <person name="Xiong Z."/>
            <person name="Dong J."/>
            <person name="Xue Y."/>
            <person name="Zhu Y."/>
            <person name="Xu X."/>
            <person name="Sun L."/>
            <person name="Chen S."/>
            <person name="Nie H."/>
            <person name="Peng J."/>
            <person name="Xu J."/>
            <person name="Wang Y."/>
            <person name="Yuan Z."/>
            <person name="Wen Y."/>
            <person name="Yao Z."/>
            <person name="Shen Y."/>
            <person name="Qiang B."/>
            <person name="Hou Y."/>
            <person name="Yu J."/>
            <person name="Jin Q."/>
        </authorList>
    </citation>
    <scope>NUCLEOTIDE SEQUENCE [LARGE SCALE GENOMIC DNA]</scope>
    <source>
        <strain>Sd197</strain>
    </source>
</reference>
<feature type="chain" id="PRO_0000257693" description="Biosynthetic peptidoglycan transglycosylase">
    <location>
        <begin position="1"/>
        <end position="242"/>
    </location>
</feature>
<feature type="transmembrane region" description="Helical" evidence="1">
    <location>
        <begin position="19"/>
        <end position="39"/>
    </location>
</feature>
<name>MTGA_SHIDS</name>